<evidence type="ECO:0000255" key="1">
    <source>
        <dbReference type="HAMAP-Rule" id="MF_00340"/>
    </source>
</evidence>
<evidence type="ECO:0000305" key="2"/>
<organism>
    <name type="scientific">Streptococcus pneumoniae (strain JJA)</name>
    <dbReference type="NCBI Taxonomy" id="488222"/>
    <lineage>
        <taxon>Bacteria</taxon>
        <taxon>Bacillati</taxon>
        <taxon>Bacillota</taxon>
        <taxon>Bacilli</taxon>
        <taxon>Lactobacillales</taxon>
        <taxon>Streptococcaceae</taxon>
        <taxon>Streptococcus</taxon>
    </lineage>
</organism>
<reference key="1">
    <citation type="journal article" date="2010" name="Genome Biol.">
        <title>Structure and dynamics of the pan-genome of Streptococcus pneumoniae and closely related species.</title>
        <authorList>
            <person name="Donati C."/>
            <person name="Hiller N.L."/>
            <person name="Tettelin H."/>
            <person name="Muzzi A."/>
            <person name="Croucher N.J."/>
            <person name="Angiuoli S.V."/>
            <person name="Oggioni M."/>
            <person name="Dunning Hotopp J.C."/>
            <person name="Hu F.Z."/>
            <person name="Riley D.R."/>
            <person name="Covacci A."/>
            <person name="Mitchell T.J."/>
            <person name="Bentley S.D."/>
            <person name="Kilian M."/>
            <person name="Ehrlich G.D."/>
            <person name="Rappuoli R."/>
            <person name="Moxon E.R."/>
            <person name="Masignani V."/>
        </authorList>
    </citation>
    <scope>NUCLEOTIDE SEQUENCE [LARGE SCALE GENOMIC DNA]</scope>
    <source>
        <strain>JJA</strain>
    </source>
</reference>
<protein>
    <recommendedName>
        <fullName evidence="1">Large ribosomal subunit protein bL32</fullName>
    </recommendedName>
    <alternativeName>
        <fullName evidence="2">50S ribosomal protein L32</fullName>
    </alternativeName>
</protein>
<name>RL32_STRZJ</name>
<dbReference type="EMBL" id="CP000919">
    <property type="protein sequence ID" value="ACO19876.1"/>
    <property type="molecule type" value="Genomic_DNA"/>
</dbReference>
<dbReference type="RefSeq" id="WP_000290419.1">
    <property type="nucleotide sequence ID" value="NC_012466.1"/>
</dbReference>
<dbReference type="SMR" id="C1CH67"/>
<dbReference type="KEGG" id="sjj:SPJ_2159"/>
<dbReference type="HOGENOM" id="CLU_129084_2_3_9"/>
<dbReference type="Proteomes" id="UP000002206">
    <property type="component" value="Chromosome"/>
</dbReference>
<dbReference type="GO" id="GO:0015934">
    <property type="term" value="C:large ribosomal subunit"/>
    <property type="evidence" value="ECO:0007669"/>
    <property type="project" value="InterPro"/>
</dbReference>
<dbReference type="GO" id="GO:0003735">
    <property type="term" value="F:structural constituent of ribosome"/>
    <property type="evidence" value="ECO:0007669"/>
    <property type="project" value="InterPro"/>
</dbReference>
<dbReference type="GO" id="GO:0006412">
    <property type="term" value="P:translation"/>
    <property type="evidence" value="ECO:0007669"/>
    <property type="project" value="UniProtKB-UniRule"/>
</dbReference>
<dbReference type="HAMAP" id="MF_00340">
    <property type="entry name" value="Ribosomal_bL32"/>
    <property type="match status" value="1"/>
</dbReference>
<dbReference type="InterPro" id="IPR002677">
    <property type="entry name" value="Ribosomal_bL32"/>
</dbReference>
<dbReference type="InterPro" id="IPR044957">
    <property type="entry name" value="Ribosomal_bL32_bact"/>
</dbReference>
<dbReference type="InterPro" id="IPR011332">
    <property type="entry name" value="Ribosomal_zn-bd"/>
</dbReference>
<dbReference type="NCBIfam" id="TIGR01031">
    <property type="entry name" value="rpmF_bact"/>
    <property type="match status" value="1"/>
</dbReference>
<dbReference type="PANTHER" id="PTHR35534">
    <property type="entry name" value="50S RIBOSOMAL PROTEIN L32"/>
    <property type="match status" value="1"/>
</dbReference>
<dbReference type="PANTHER" id="PTHR35534:SF1">
    <property type="entry name" value="LARGE RIBOSOMAL SUBUNIT PROTEIN BL32"/>
    <property type="match status" value="1"/>
</dbReference>
<dbReference type="Pfam" id="PF01783">
    <property type="entry name" value="Ribosomal_L32p"/>
    <property type="match status" value="1"/>
</dbReference>
<dbReference type="SUPFAM" id="SSF57829">
    <property type="entry name" value="Zn-binding ribosomal proteins"/>
    <property type="match status" value="1"/>
</dbReference>
<accession>C1CH67</accession>
<comment type="similarity">
    <text evidence="1">Belongs to the bacterial ribosomal protein bL32 family.</text>
</comment>
<proteinExistence type="inferred from homology"/>
<feature type="chain" id="PRO_1000195997" description="Large ribosomal subunit protein bL32">
    <location>
        <begin position="1"/>
        <end position="60"/>
    </location>
</feature>
<gene>
    <name evidence="1" type="primary">rpmF</name>
    <name type="ordered locus">SPJ_2159</name>
</gene>
<sequence length="60" mass="6802">MAVPARRTSKAKKNKRRTHYKVTAPSVNFDETTGDYSRSHRVSLKGYYKGRKITKAASAE</sequence>
<keyword id="KW-0687">Ribonucleoprotein</keyword>
<keyword id="KW-0689">Ribosomal protein</keyword>